<reference key="1">
    <citation type="journal article" date="2009" name="BMC Genomics">
        <title>Pseudogene accumulation in the evolutionary histories of Salmonella enterica serovars Paratyphi A and Typhi.</title>
        <authorList>
            <person name="Holt K.E."/>
            <person name="Thomson N.R."/>
            <person name="Wain J."/>
            <person name="Langridge G.C."/>
            <person name="Hasan R."/>
            <person name="Bhutta Z.A."/>
            <person name="Quail M.A."/>
            <person name="Norbertczak H."/>
            <person name="Walker D."/>
            <person name="Simmonds M."/>
            <person name="White B."/>
            <person name="Bason N."/>
            <person name="Mungall K."/>
            <person name="Dougan G."/>
            <person name="Parkhill J."/>
        </authorList>
    </citation>
    <scope>NUCLEOTIDE SEQUENCE [LARGE SCALE GENOMIC DNA]</scope>
    <source>
        <strain>AKU_12601</strain>
    </source>
</reference>
<accession>B5BDE6</accession>
<name>YAII_SALPK</name>
<protein>
    <recommendedName>
        <fullName evidence="1">UPF0178 protein YaiI</fullName>
    </recommendedName>
</protein>
<sequence length="151" mass="16945">MTIWVDADACPNVIKEILYRAAERMQLPLILVANQALRVPPSRFIRTLRVAAGFDVADNEIVRQCEAGDLVITADIPLAAEVLEKGAAALNPRGERYSDATIRERLTMRDFMDTLRASGVQTGGPNTLSPRDRQHFAAELDKWWLESQRKK</sequence>
<evidence type="ECO:0000255" key="1">
    <source>
        <dbReference type="HAMAP-Rule" id="MF_00489"/>
    </source>
</evidence>
<organism>
    <name type="scientific">Salmonella paratyphi A (strain AKU_12601)</name>
    <dbReference type="NCBI Taxonomy" id="554290"/>
    <lineage>
        <taxon>Bacteria</taxon>
        <taxon>Pseudomonadati</taxon>
        <taxon>Pseudomonadota</taxon>
        <taxon>Gammaproteobacteria</taxon>
        <taxon>Enterobacterales</taxon>
        <taxon>Enterobacteriaceae</taxon>
        <taxon>Salmonella</taxon>
    </lineage>
</organism>
<gene>
    <name evidence="1" type="primary">yaiI</name>
    <name type="ordered locus">SSPA2179</name>
</gene>
<dbReference type="EMBL" id="FM200053">
    <property type="protein sequence ID" value="CAR60389.1"/>
    <property type="molecule type" value="Genomic_DNA"/>
</dbReference>
<dbReference type="RefSeq" id="WP_000158137.1">
    <property type="nucleotide sequence ID" value="NC_011147.1"/>
</dbReference>
<dbReference type="KEGG" id="sek:SSPA2179"/>
<dbReference type="HOGENOM" id="CLU_106619_1_0_6"/>
<dbReference type="Proteomes" id="UP000001869">
    <property type="component" value="Chromosome"/>
</dbReference>
<dbReference type="CDD" id="cd18720">
    <property type="entry name" value="PIN_YqxD-like"/>
    <property type="match status" value="1"/>
</dbReference>
<dbReference type="HAMAP" id="MF_00489">
    <property type="entry name" value="UPF0178"/>
    <property type="match status" value="1"/>
</dbReference>
<dbReference type="InterPro" id="IPR003791">
    <property type="entry name" value="UPF0178"/>
</dbReference>
<dbReference type="NCBIfam" id="NF001095">
    <property type="entry name" value="PRK00124.1"/>
    <property type="match status" value="1"/>
</dbReference>
<dbReference type="PANTHER" id="PTHR35146">
    <property type="entry name" value="UPF0178 PROTEIN YAII"/>
    <property type="match status" value="1"/>
</dbReference>
<dbReference type="PANTHER" id="PTHR35146:SF1">
    <property type="entry name" value="UPF0178 PROTEIN YAII"/>
    <property type="match status" value="1"/>
</dbReference>
<dbReference type="Pfam" id="PF02639">
    <property type="entry name" value="DUF188"/>
    <property type="match status" value="1"/>
</dbReference>
<feature type="chain" id="PRO_1000126212" description="UPF0178 protein YaiI">
    <location>
        <begin position="1"/>
        <end position="151"/>
    </location>
</feature>
<proteinExistence type="inferred from homology"/>
<comment type="similarity">
    <text evidence="1">Belongs to the UPF0178 family.</text>
</comment>